<protein>
    <recommendedName>
        <fullName evidence="8">Highly reducing polyketide synthase pks5</fullName>
        <shortName evidence="8">HR-PKS pks5</shortName>
        <ecNumber evidence="9">2.3.1.-</ecNumber>
    </recommendedName>
    <alternativeName>
        <fullName evidence="8">Abscisic acid biosynthesis cluster protein pks5</fullName>
    </alternativeName>
</protein>
<gene>
    <name evidence="8" type="primary">pks5</name>
    <name type="ORF">LEMA_P087730.1</name>
</gene>
<comment type="function">
    <text evidence="1 7">Highly reducing polyketide synthase; part of the gene cluster that mediates the biosynthesis of abscisic acid (ABA), a phytohormone that acts antagonistically toward salicylic acid (SA), jasmonic acid (JA) and ethylene (ETH) signaling, to impede plant defense responses (PubMed:31034868). The first step of the pathway catalyzes the reaction from farnesyl diphosphate to alpha-ionylideneethane performed by the alpha-ionylideneethane synthase abl3 via a three-step reaction mechanism involving 2 neutral intermediates, beta-farnesene and allofarnesene (By similarity). The cytochrome P450 monooxygenase abl1 might then be involved in the conversion of alpha-ionylideneethane to alpha-ionylideneacetic acid (By similarity). Alpha-ionylideneacetic acid is further converted to abscisic acid in 2 steps involving the cytochrome P450 monooxygenase abl2 and the short-chain dehydrogenase/reductase abl4, via the intermediates 1'-deoxy-ABA or 1',4'-trans-diol-ABA, depending on the order of action of these 2 enzymes (By similarity). Abl2 is responsible for the hydroxylation of carbon atom C-1' and abl4 might be involved in the oxidation of the C-4' carbon atom (By similarity). Pks5 is clearly not involved in the production of ABA. Nonetheless, the possibility cannot be excluded that pks5 may modify ABA into another compound. It also cannot be excluded the possibility that pks5 also has a function completely independent of ABA synthesis (PubMed:31034868). Pks5 is not required for pathogenicity on B.napus cotyledon (PubMed:31034868).</text>
</comment>
<comment type="induction">
    <text evidence="7">Expression is induced during the early biotrophic stage of development (PubMed:31034868). Expression is positively regulated by the ABA cluster-specific transcription regulator abl7 (PubMed:31034868).</text>
</comment>
<comment type="domain">
    <text evidence="9">Multidomain protein; including a ketosynthase (KS) that catalyzes repeated decarboxylative condensation to elongate the polyketide backbone; a malonyl-CoA:ACP transacylase (MAT) that selects and transfers the extender unit malonyl-CoA; a dehydratase (DH) domain that reduces hydroxyl groups to enoyl groups; a methyltransferase (CMeT) domain responsible for the incorporation of methyl groups; an enoylreductase (ER) domain that reduces enoyl groups to alkyl group; a ketoreductase (KR) domain that catalyzes beta-ketoreduction steps; and an acyl-carrier protein (ACP) that serves as the tether of the growing and completed polyketide via its phosphopantetheinyl arm.</text>
</comment>
<comment type="disruption phenotype">
    <text evidence="7">Does not affect the production of abscisic acid (ABA) but leads to the accumulation of unidentified compounds (PubMed:31034868). Does not affect sporulation, pycnidiospore germination nor fungal growth rates in vitro, and does not alter the pathogenicity of L.maculans (PubMed:31034868).</text>
</comment>
<name>PKS5_LEPMJ</name>
<accession>E5A7D9</accession>
<reference key="1">
    <citation type="journal article" date="2011" name="Nat. Commun.">
        <title>Effector diversification within compartments of the Leptosphaeria maculans genome affected by Repeat-Induced Point mutations.</title>
        <authorList>
            <person name="Rouxel T."/>
            <person name="Grandaubert J."/>
            <person name="Hane J.K."/>
            <person name="Hoede C."/>
            <person name="van de Wouw A.P."/>
            <person name="Couloux A."/>
            <person name="Dominguez V."/>
            <person name="Anthouard V."/>
            <person name="Bally P."/>
            <person name="Bourras S."/>
            <person name="Cozijnsen A.J."/>
            <person name="Ciuffetti L.M."/>
            <person name="Degrave A."/>
            <person name="Dilmaghani A."/>
            <person name="Duret L."/>
            <person name="Fudal I."/>
            <person name="Goodwin S.B."/>
            <person name="Gout L."/>
            <person name="Glaser N."/>
            <person name="Linglin J."/>
            <person name="Kema G.H.J."/>
            <person name="Lapalu N."/>
            <person name="Lawrence C.B."/>
            <person name="May K."/>
            <person name="Meyer M."/>
            <person name="Ollivier B."/>
            <person name="Poulain J."/>
            <person name="Schoch C.L."/>
            <person name="Simon A."/>
            <person name="Spatafora J.W."/>
            <person name="Stachowiak A."/>
            <person name="Turgeon B.G."/>
            <person name="Tyler B.M."/>
            <person name="Vincent D."/>
            <person name="Weissenbach J."/>
            <person name="Amselem J."/>
            <person name="Quesneville H."/>
            <person name="Oliver R.P."/>
            <person name="Wincker P."/>
            <person name="Balesdent M.-H."/>
            <person name="Howlett B.J."/>
        </authorList>
    </citation>
    <scope>NUCLEOTIDE SEQUENCE [LARGE SCALE GENOMIC DNA]</scope>
    <source>
        <strain>JN3 / isolate v23.1.3 / race Av1-4-5-6-7-8</strain>
    </source>
</reference>
<reference key="2">
    <citation type="journal article" date="2019" name="Fungal Genet. Biol.">
        <title>Identification of a gene cluster for the synthesis of the plant hormone abscisic acid in the plant pathogen Leptosphaeria maculans.</title>
        <authorList>
            <person name="Darma R."/>
            <person name="Lutz A."/>
            <person name="Elliott C.E."/>
            <person name="Idnurm A."/>
        </authorList>
    </citation>
    <scope>IDENTIFICATION</scope>
    <scope>INDUCTION</scope>
    <scope>FUNCTION</scope>
    <scope>DISRUPTION PHENOTYPE</scope>
</reference>
<keyword id="KW-0012">Acyltransferase</keyword>
<keyword id="KW-0489">Methyltransferase</keyword>
<keyword id="KW-0511">Multifunctional enzyme</keyword>
<keyword id="KW-0521">NADP</keyword>
<keyword id="KW-0560">Oxidoreductase</keyword>
<keyword id="KW-0596">Phosphopantetheine</keyword>
<keyword id="KW-0597">Phosphoprotein</keyword>
<keyword id="KW-1185">Reference proteome</keyword>
<keyword id="KW-0808">Transferase</keyword>
<sequence>MVVKFANGVRNRGNGDEGQRGTQRPLSTPIAIVGMSCRFAGGATSPSNLWGLLSEGKDAWSPVPTDRFDASSLYHPDQQRTDRHHIQGGYFLDGDVTRFDAPFFNLSAEAASSMDPQLRLSMEGVFEALENAGIPLGKIAGTNTSVFSGTFGRDYTDRLVKDPETLPPSYFTGNGAAMYSNRISHFFDLKGQSVTTDTGCSGSMAALHLAAQTIRTGESDMSIVAVAQFMMNPDLYIALSNLGVLSPQGKCLPWDHRANGYGRGEGMAVVILKRLDLALKDGDHIHSVIRESAMNQDGKTSTITTPAKEAQQTLIRDCYSRAGLSLSETAYIEAHMTGTPTGDPIEAESLAKTFGAARAAGDSVYVGSIKANIGHTEPVSGLASIIKTALVLQHQQIPPHLNYEKSNPAIPLQDWNLKLPLSLIGWPEGAPLRASVNNFGYGGTNVHVIMEAAPVSTAKTLHTSEFNTINEVESQQIGPTEASPSYVYIISSRHSAGGLEMGESLALHIRDSIMRDQKPRAIDLAYTLAERRTRFAWTTVVKATSIEELADKLEETLRKPIRATTIPRLGFIFNGQGAQWYAMGRELLARYPVFQSAVRHCDHILTQIYQAPWSLYEELSRDEASSRIHDAEISQPANVAIQLCLVDLLTSWNVMPTAVVSHSSGEIAAAYAAGILSFKEALGVAYYRGFLLAAHCTGDALQGGMMAVRLSVDDVQGYIKSTSSGKVVIACVNSPSSVTLSGDIDALTELASMLEDDAVPARKLNVPLAYHSHHMNPIAKSYQNRLDVLLDTGKVPKILVASPVTGELVSHGETLDSKHWVKNLVSPVLFSEALESMVFGSKNVDRHSSSGTQSMNVDILIEVGAHSTLSGAVRETLGNAQLPYLSCLRRNIDAVSTMQDVACDLLVRGYPVSLAGVNFLEGQELNFVHDLPTYAWDHSTSYLVEPRASRQNRYRRFPSHELLGSSVPGASSLTPTWRNFLRVQDLEWLADHQLESKIVFPAAGYISMAIEAVRRLKLSSGAREEPTSYRLRDIDFMTALLISSGQSGTEVVFTLRDCSDKELDYRGWYEFELFSISPSDAWIRHCTGYVSAEDSSKNLKATRALSSDVERVAVADRVRHVRPDAMFAGLRKTGIYHGPAFQNLIGSKITGSSSDTSFMLSPKALAKDEEYVLHPTTLDSIFQTCYFSLPEEAQDRAMMVPKSIGSLTVPRDFGRQNDNKLQSRVRLLHCTSRDAAFKGTVVQAKMSEEADVPLLMHNLRLQKIQAEDDNAGKLFRVHSQGRWEPDILHDVPAKTKASMQIVLSDSGLSDEKDFREAAYHLMFECLAQLQHEESKGWQPFHKRYHHWLQTIVKSVETGQLAHAAALEAHEWLDRSEAAKRSILEKVAAMNAGGELLVKIGRHLTQIIRGDITPLELMMENGLLQRYYTELPQFNNTYQQLRKVLEHYAIKEPGAKILEVGAGTGGATLHALQAFAAMDETNSSKTLLGHYDYTDVSADFFPEAKKKFASWEGRMNFARLNIEIDPIQQGFTAGSYDLIIASQVLHATVSLANTLSNVRKLLKPKGKLIFLEGTQHSIDLELIFGTLPGWWLGEEPERQMSAIADVPTWDRFLKSSGFSGVDMNIGNCEQPEVQVSSVLIATAAAEPSYPSSISIIWGRNAPLAWRKELATAIAAKTGTAPRHETLKDVCPDETTLYLVAIELEYDLVSSMNQVTFEKLRHLLVSSMGIFWVSGGGLIDSQKPLWGLTPGLLRTFRREDMNKRCVHLDFDVSKDLWNAETTNHIMHVFEEGFDYSLENSNMDWEYAVKNSELHVLRYYPDVELDMRCSGIKPMPEHRLWYDDERDLQYQVPEGSGDLLNKIEFLEVPRLVDDVPFGMVEIETKAFGLNFQDLMLALGFVKDVLTLTHEGAGFVKRLGPGTERSGLRIGDRICGAFRGSFASTSMAWWTNIVKIPDEMSWEEAAAFSVAYLTVHVGLDHVARLQKEERILIHSAAGGVGQAAIMWAQHVGAEIFATCGTETKRQFLMDTYNISADHIFSSRDACFASEIIDRTGEQGVDVVLNSLGGPLLKASWGCLADFGRFVEIGKVDLHAAKRLDMTPFGRNITMAGVDLVAYSELRGMVIHNALVALMKLYRSGHLRSLRPITRFNISDMGAAMKHMQSGTHMGKIVLTIEPTAVVNVSPRITSLDLANMNVTHLIVGGLRGVGHAIALRMIEKGARNVLAISRNASSHPNRLELQKTADQHGCKLVIRDCDISSAEELVEIVGSLGDLHMPPIGGVLQAAMVLDDTVLERMSYEQWQTAVRPKVAGTLNLHNNLPGLRYFIMLSSGTAITGNVSQANYAAGNTFQDTLARHRTLHGEPAISINLGPVDDVGYVAEQGEDVLKRVDKAVTSMSLSVNHVMQLIEGGIIDPLKKTGDKSQIITCFPRYEALPDNQGVKDDKRFGTLRLGDEGVASTGGNGLSASRVNELTQELVSNGRSTGESAARKLVSELITEELSELFSIDPNDIDPGMPLTHHGVDSLVAVRVRNWLISEVKARVAIFEILQSPSLTDFAALVASRSSLITSCV</sequence>
<dbReference type="EC" id="2.3.1.-" evidence="9"/>
<dbReference type="EMBL" id="FP929136">
    <property type="protein sequence ID" value="CBX99534.1"/>
    <property type="molecule type" value="Genomic_DNA"/>
</dbReference>
<dbReference type="RefSeq" id="XP_003843013.1">
    <property type="nucleotide sequence ID" value="XM_003842965.1"/>
</dbReference>
<dbReference type="SMR" id="E5A7D9"/>
<dbReference type="STRING" id="985895.E5A7D9"/>
<dbReference type="EnsemblFungi" id="CBX99534">
    <property type="protein sequence ID" value="CBX99534"/>
    <property type="gene ID" value="LEMA_P087730.1"/>
</dbReference>
<dbReference type="VEuPathDB" id="FungiDB:LEMA_P087730.1"/>
<dbReference type="eggNOG" id="KOG1202">
    <property type="taxonomic scope" value="Eukaryota"/>
</dbReference>
<dbReference type="HOGENOM" id="CLU_000022_31_0_1"/>
<dbReference type="InParanoid" id="E5A7D9"/>
<dbReference type="OMA" id="HWVRNLT"/>
<dbReference type="OrthoDB" id="329835at2759"/>
<dbReference type="PHI-base" id="PHI:10273"/>
<dbReference type="Proteomes" id="UP000002668">
    <property type="component" value="Genome"/>
</dbReference>
<dbReference type="GO" id="GO:0004312">
    <property type="term" value="F:fatty acid synthase activity"/>
    <property type="evidence" value="ECO:0007669"/>
    <property type="project" value="TreeGrafter"/>
</dbReference>
<dbReference type="GO" id="GO:0008168">
    <property type="term" value="F:methyltransferase activity"/>
    <property type="evidence" value="ECO:0007669"/>
    <property type="project" value="UniProtKB-KW"/>
</dbReference>
<dbReference type="GO" id="GO:0016491">
    <property type="term" value="F:oxidoreductase activity"/>
    <property type="evidence" value="ECO:0007669"/>
    <property type="project" value="UniProtKB-KW"/>
</dbReference>
<dbReference type="GO" id="GO:0031177">
    <property type="term" value="F:phosphopantetheine binding"/>
    <property type="evidence" value="ECO:0007669"/>
    <property type="project" value="InterPro"/>
</dbReference>
<dbReference type="GO" id="GO:0006633">
    <property type="term" value="P:fatty acid biosynthetic process"/>
    <property type="evidence" value="ECO:0007669"/>
    <property type="project" value="TreeGrafter"/>
</dbReference>
<dbReference type="GO" id="GO:0032259">
    <property type="term" value="P:methylation"/>
    <property type="evidence" value="ECO:0007669"/>
    <property type="project" value="UniProtKB-KW"/>
</dbReference>
<dbReference type="GO" id="GO:0044550">
    <property type="term" value="P:secondary metabolite biosynthetic process"/>
    <property type="evidence" value="ECO:0007669"/>
    <property type="project" value="TreeGrafter"/>
</dbReference>
<dbReference type="CDD" id="cd02440">
    <property type="entry name" value="AdoMet_MTases"/>
    <property type="match status" value="1"/>
</dbReference>
<dbReference type="CDD" id="cd05195">
    <property type="entry name" value="enoyl_red"/>
    <property type="match status" value="1"/>
</dbReference>
<dbReference type="CDD" id="cd00833">
    <property type="entry name" value="PKS"/>
    <property type="match status" value="1"/>
</dbReference>
<dbReference type="FunFam" id="3.40.50.720:FF:000209">
    <property type="entry name" value="Polyketide synthase Pks12"/>
    <property type="match status" value="1"/>
</dbReference>
<dbReference type="FunFam" id="3.40.366.10:FF:000002">
    <property type="entry name" value="Probable polyketide synthase 2"/>
    <property type="match status" value="1"/>
</dbReference>
<dbReference type="Gene3D" id="3.30.70.3290">
    <property type="match status" value="1"/>
</dbReference>
<dbReference type="Gene3D" id="3.40.47.10">
    <property type="match status" value="1"/>
</dbReference>
<dbReference type="Gene3D" id="1.10.1200.10">
    <property type="entry name" value="ACP-like"/>
    <property type="match status" value="1"/>
</dbReference>
<dbReference type="Gene3D" id="3.40.366.10">
    <property type="entry name" value="Malonyl-Coenzyme A Acyl Carrier Protein, domain 2"/>
    <property type="match status" value="1"/>
</dbReference>
<dbReference type="Gene3D" id="3.90.180.10">
    <property type="entry name" value="Medium-chain alcohol dehydrogenases, catalytic domain"/>
    <property type="match status" value="1"/>
</dbReference>
<dbReference type="Gene3D" id="3.40.50.720">
    <property type="entry name" value="NAD(P)-binding Rossmann-like Domain"/>
    <property type="match status" value="1"/>
</dbReference>
<dbReference type="Gene3D" id="3.10.129.110">
    <property type="entry name" value="Polyketide synthase dehydratase"/>
    <property type="match status" value="1"/>
</dbReference>
<dbReference type="Gene3D" id="3.40.50.150">
    <property type="entry name" value="Vaccinia Virus protein VP39"/>
    <property type="match status" value="1"/>
</dbReference>
<dbReference type="InterPro" id="IPR001227">
    <property type="entry name" value="Ac_transferase_dom_sf"/>
</dbReference>
<dbReference type="InterPro" id="IPR036736">
    <property type="entry name" value="ACP-like_sf"/>
</dbReference>
<dbReference type="InterPro" id="IPR014043">
    <property type="entry name" value="Acyl_transferase_dom"/>
</dbReference>
<dbReference type="InterPro" id="IPR016035">
    <property type="entry name" value="Acyl_Trfase/lysoPLipase"/>
</dbReference>
<dbReference type="InterPro" id="IPR011032">
    <property type="entry name" value="GroES-like_sf"/>
</dbReference>
<dbReference type="InterPro" id="IPR014031">
    <property type="entry name" value="Ketoacyl_synth_C"/>
</dbReference>
<dbReference type="InterPro" id="IPR014030">
    <property type="entry name" value="Ketoacyl_synth_N"/>
</dbReference>
<dbReference type="InterPro" id="IPR016036">
    <property type="entry name" value="Malonyl_transacylase_ACP-bd"/>
</dbReference>
<dbReference type="InterPro" id="IPR013217">
    <property type="entry name" value="Methyltransf_12"/>
</dbReference>
<dbReference type="InterPro" id="IPR036291">
    <property type="entry name" value="NAD(P)-bd_dom_sf"/>
</dbReference>
<dbReference type="InterPro" id="IPR056501">
    <property type="entry name" value="NAD-bd_HRPKS_sdrA"/>
</dbReference>
<dbReference type="InterPro" id="IPR032821">
    <property type="entry name" value="PKS_assoc"/>
</dbReference>
<dbReference type="InterPro" id="IPR020841">
    <property type="entry name" value="PKS_Beta-ketoAc_synthase_dom"/>
</dbReference>
<dbReference type="InterPro" id="IPR042104">
    <property type="entry name" value="PKS_dehydratase_sf"/>
</dbReference>
<dbReference type="InterPro" id="IPR020807">
    <property type="entry name" value="PKS_DH"/>
</dbReference>
<dbReference type="InterPro" id="IPR049551">
    <property type="entry name" value="PKS_DH_C"/>
</dbReference>
<dbReference type="InterPro" id="IPR049552">
    <property type="entry name" value="PKS_DH_N"/>
</dbReference>
<dbReference type="InterPro" id="IPR020843">
    <property type="entry name" value="PKS_ER"/>
</dbReference>
<dbReference type="InterPro" id="IPR013968">
    <property type="entry name" value="PKS_KR"/>
</dbReference>
<dbReference type="InterPro" id="IPR049900">
    <property type="entry name" value="PKS_mFAS_DH"/>
</dbReference>
<dbReference type="InterPro" id="IPR050091">
    <property type="entry name" value="PKS_NRPS_Biosynth_Enz"/>
</dbReference>
<dbReference type="InterPro" id="IPR020806">
    <property type="entry name" value="PKS_PP-bd"/>
</dbReference>
<dbReference type="InterPro" id="IPR009081">
    <property type="entry name" value="PP-bd_ACP"/>
</dbReference>
<dbReference type="InterPro" id="IPR029063">
    <property type="entry name" value="SAM-dependent_MTases_sf"/>
</dbReference>
<dbReference type="InterPro" id="IPR016039">
    <property type="entry name" value="Thiolase-like"/>
</dbReference>
<dbReference type="PANTHER" id="PTHR43775:SF29">
    <property type="entry name" value="ASPERFURANONE POLYKETIDE SYNTHASE AFOG-RELATED"/>
    <property type="match status" value="1"/>
</dbReference>
<dbReference type="PANTHER" id="PTHR43775">
    <property type="entry name" value="FATTY ACID SYNTHASE"/>
    <property type="match status" value="1"/>
</dbReference>
<dbReference type="Pfam" id="PF23297">
    <property type="entry name" value="ACP_SdgA_C"/>
    <property type="match status" value="1"/>
</dbReference>
<dbReference type="Pfam" id="PF00698">
    <property type="entry name" value="Acyl_transf_1"/>
    <property type="match status" value="1"/>
</dbReference>
<dbReference type="Pfam" id="PF13602">
    <property type="entry name" value="ADH_zinc_N_2"/>
    <property type="match status" value="1"/>
</dbReference>
<dbReference type="Pfam" id="PF16197">
    <property type="entry name" value="KAsynt_C_assoc"/>
    <property type="match status" value="1"/>
</dbReference>
<dbReference type="Pfam" id="PF00109">
    <property type="entry name" value="ketoacyl-synt"/>
    <property type="match status" value="1"/>
</dbReference>
<dbReference type="Pfam" id="PF02801">
    <property type="entry name" value="Ketoacyl-synt_C"/>
    <property type="match status" value="1"/>
</dbReference>
<dbReference type="Pfam" id="PF08659">
    <property type="entry name" value="KR"/>
    <property type="match status" value="1"/>
</dbReference>
<dbReference type="Pfam" id="PF08242">
    <property type="entry name" value="Methyltransf_12"/>
    <property type="match status" value="1"/>
</dbReference>
<dbReference type="Pfam" id="PF23114">
    <property type="entry name" value="NAD-bd_HRPKS_sdrA"/>
    <property type="match status" value="1"/>
</dbReference>
<dbReference type="Pfam" id="PF21089">
    <property type="entry name" value="PKS_DH_N"/>
    <property type="match status" value="1"/>
</dbReference>
<dbReference type="Pfam" id="PF14765">
    <property type="entry name" value="PS-DH"/>
    <property type="match status" value="1"/>
</dbReference>
<dbReference type="SMART" id="SM00827">
    <property type="entry name" value="PKS_AT"/>
    <property type="match status" value="1"/>
</dbReference>
<dbReference type="SMART" id="SM00826">
    <property type="entry name" value="PKS_DH"/>
    <property type="match status" value="1"/>
</dbReference>
<dbReference type="SMART" id="SM00829">
    <property type="entry name" value="PKS_ER"/>
    <property type="match status" value="1"/>
</dbReference>
<dbReference type="SMART" id="SM00822">
    <property type="entry name" value="PKS_KR"/>
    <property type="match status" value="1"/>
</dbReference>
<dbReference type="SMART" id="SM00825">
    <property type="entry name" value="PKS_KS"/>
    <property type="match status" value="1"/>
</dbReference>
<dbReference type="SMART" id="SM00823">
    <property type="entry name" value="PKS_PP"/>
    <property type="match status" value="1"/>
</dbReference>
<dbReference type="SUPFAM" id="SSF47336">
    <property type="entry name" value="ACP-like"/>
    <property type="match status" value="1"/>
</dbReference>
<dbReference type="SUPFAM" id="SSF52151">
    <property type="entry name" value="FabD/lysophospholipase-like"/>
    <property type="match status" value="1"/>
</dbReference>
<dbReference type="SUPFAM" id="SSF50129">
    <property type="entry name" value="GroES-like"/>
    <property type="match status" value="1"/>
</dbReference>
<dbReference type="SUPFAM" id="SSF51735">
    <property type="entry name" value="NAD(P)-binding Rossmann-fold domains"/>
    <property type="match status" value="2"/>
</dbReference>
<dbReference type="SUPFAM" id="SSF55048">
    <property type="entry name" value="Probable ACP-binding domain of malonyl-CoA ACP transacylase"/>
    <property type="match status" value="1"/>
</dbReference>
<dbReference type="SUPFAM" id="SSF53335">
    <property type="entry name" value="S-adenosyl-L-methionine-dependent methyltransferases"/>
    <property type="match status" value="1"/>
</dbReference>
<dbReference type="SUPFAM" id="SSF53901">
    <property type="entry name" value="Thiolase-like"/>
    <property type="match status" value="1"/>
</dbReference>
<dbReference type="PROSITE" id="PS50075">
    <property type="entry name" value="CARRIER"/>
    <property type="match status" value="1"/>
</dbReference>
<dbReference type="PROSITE" id="PS52004">
    <property type="entry name" value="KS3_2"/>
    <property type="match status" value="1"/>
</dbReference>
<dbReference type="PROSITE" id="PS52019">
    <property type="entry name" value="PKS_MFAS_DH"/>
    <property type="match status" value="1"/>
</dbReference>
<organism>
    <name type="scientific">Leptosphaeria maculans (strain JN3 / isolate v23.1.3 / race Av1-4-5-6-7-8)</name>
    <name type="common">Blackleg fungus</name>
    <name type="synonym">Phoma lingam</name>
    <dbReference type="NCBI Taxonomy" id="985895"/>
    <lineage>
        <taxon>Eukaryota</taxon>
        <taxon>Fungi</taxon>
        <taxon>Dikarya</taxon>
        <taxon>Ascomycota</taxon>
        <taxon>Pezizomycotina</taxon>
        <taxon>Dothideomycetes</taxon>
        <taxon>Pleosporomycetidae</taxon>
        <taxon>Pleosporales</taxon>
        <taxon>Pleosporineae</taxon>
        <taxon>Leptosphaeriaceae</taxon>
        <taxon>Plenodomus</taxon>
        <taxon>Plenodomus lingam/Leptosphaeria maculans species complex</taxon>
    </lineage>
</organism>
<feature type="chain" id="PRO_0000448425" description="Highly reducing polyketide synthase pks5">
    <location>
        <begin position="1"/>
        <end position="2569"/>
    </location>
</feature>
<feature type="domain" description="Ketosynthase family 3 (KS3)" evidence="4">
    <location>
        <begin position="27"/>
        <end position="452"/>
    </location>
</feature>
<feature type="domain" description="PKS/mFAS DH" evidence="5">
    <location>
        <begin position="960"/>
        <end position="1270"/>
    </location>
</feature>
<feature type="domain" description="Carrier" evidence="3">
    <location>
        <begin position="2485"/>
        <end position="2562"/>
    </location>
</feature>
<feature type="region of interest" description="Disordered" evidence="6">
    <location>
        <begin position="1"/>
        <end position="25"/>
    </location>
</feature>
<feature type="region of interest" description="Malonyl-CoA:ACP transacylase (MAT) domain" evidence="2">
    <location>
        <begin position="572"/>
        <end position="892"/>
    </location>
</feature>
<feature type="region of interest" description="Dehydratase (DH) domain" evidence="2">
    <location>
        <begin position="960"/>
        <end position="1268"/>
    </location>
</feature>
<feature type="region of interest" description="N-terminal hotdog fold" evidence="5">
    <location>
        <begin position="960"/>
        <end position="1097"/>
    </location>
</feature>
<feature type="region of interest" description="C-terminal hotdog fold" evidence="5">
    <location>
        <begin position="1117"/>
        <end position="1270"/>
    </location>
</feature>
<feature type="region of interest" description="Methyltransferase (CMet) domain" evidence="2">
    <location>
        <begin position="1457"/>
        <end position="1567"/>
    </location>
</feature>
<feature type="region of interest" description="Enoyl reductase (ER) domain" evidence="2">
    <location>
        <begin position="1855"/>
        <end position="2170"/>
    </location>
</feature>
<feature type="region of interest" description="Ketoreductase (KR) domain" evidence="2">
    <location>
        <begin position="2195"/>
        <end position="2371"/>
    </location>
</feature>
<feature type="active site" description="For beta-ketoacyl synthase activity" evidence="4">
    <location>
        <position position="200"/>
    </location>
</feature>
<feature type="active site" description="For beta-ketoacyl synthase activity" evidence="4">
    <location>
        <position position="335"/>
    </location>
</feature>
<feature type="active site" description="For beta-ketoacyl synthase activity" evidence="4">
    <location>
        <position position="375"/>
    </location>
</feature>
<feature type="active site" description="Proton acceptor; for dehydratase activity" evidence="5">
    <location>
        <position position="992"/>
    </location>
</feature>
<feature type="active site" description="Proton donor; for dehydratase activity" evidence="5">
    <location>
        <position position="1179"/>
    </location>
</feature>
<feature type="modified residue" description="O-(pantetheine 4'-phosphoryl)serine" evidence="3">
    <location>
        <position position="2522"/>
    </location>
</feature>
<proteinExistence type="evidence at transcript level"/>
<evidence type="ECO:0000250" key="1">
    <source>
        <dbReference type="UniProtKB" id="Q6H9H9"/>
    </source>
</evidence>
<evidence type="ECO:0000255" key="2"/>
<evidence type="ECO:0000255" key="3">
    <source>
        <dbReference type="PROSITE-ProRule" id="PRU00258"/>
    </source>
</evidence>
<evidence type="ECO:0000255" key="4">
    <source>
        <dbReference type="PROSITE-ProRule" id="PRU01348"/>
    </source>
</evidence>
<evidence type="ECO:0000255" key="5">
    <source>
        <dbReference type="PROSITE-ProRule" id="PRU01363"/>
    </source>
</evidence>
<evidence type="ECO:0000256" key="6">
    <source>
        <dbReference type="SAM" id="MobiDB-lite"/>
    </source>
</evidence>
<evidence type="ECO:0000269" key="7">
    <source>
    </source>
</evidence>
<evidence type="ECO:0000303" key="8">
    <source>
    </source>
</evidence>
<evidence type="ECO:0000305" key="9">
    <source>
    </source>
</evidence>